<name>ISPF_CUPMC</name>
<sequence length="168" mass="17908">MNPFDIRIGQGYDVHALVPGRKLILGGVDIPHDRGLLGHSDADALLHAVTDALFGAAALGDIGRHFPDTDPNFAGADSRVLLREAVRRVREAGYEIGNVDATVIAQKPKLAPHISGMVANLAEDLGLPVTRCNVKAKTNEKLGFEGKEEGIVAQAAVLIYRRNGDAQD</sequence>
<keyword id="KW-0414">Isoprene biosynthesis</keyword>
<keyword id="KW-0456">Lyase</keyword>
<keyword id="KW-0479">Metal-binding</keyword>
<keyword id="KW-1185">Reference proteome</keyword>
<accession>Q1LLZ4</accession>
<dbReference type="EC" id="4.6.1.12" evidence="1"/>
<dbReference type="EMBL" id="CP000352">
    <property type="protein sequence ID" value="ABF08832.1"/>
    <property type="molecule type" value="Genomic_DNA"/>
</dbReference>
<dbReference type="RefSeq" id="WP_011516680.1">
    <property type="nucleotide sequence ID" value="NC_007973.1"/>
</dbReference>
<dbReference type="SMR" id="Q1LLZ4"/>
<dbReference type="STRING" id="266264.Rmet_1953"/>
<dbReference type="KEGG" id="rme:Rmet_1953"/>
<dbReference type="eggNOG" id="COG0245">
    <property type="taxonomic scope" value="Bacteria"/>
</dbReference>
<dbReference type="HOGENOM" id="CLU_084630_2_0_4"/>
<dbReference type="UniPathway" id="UPA00056">
    <property type="reaction ID" value="UER00095"/>
</dbReference>
<dbReference type="Proteomes" id="UP000002429">
    <property type="component" value="Chromosome"/>
</dbReference>
<dbReference type="GO" id="GO:0008685">
    <property type="term" value="F:2-C-methyl-D-erythritol 2,4-cyclodiphosphate synthase activity"/>
    <property type="evidence" value="ECO:0007669"/>
    <property type="project" value="UniProtKB-UniRule"/>
</dbReference>
<dbReference type="GO" id="GO:0046872">
    <property type="term" value="F:metal ion binding"/>
    <property type="evidence" value="ECO:0007669"/>
    <property type="project" value="UniProtKB-KW"/>
</dbReference>
<dbReference type="GO" id="GO:0019288">
    <property type="term" value="P:isopentenyl diphosphate biosynthetic process, methylerythritol 4-phosphate pathway"/>
    <property type="evidence" value="ECO:0007669"/>
    <property type="project" value="UniProtKB-UniRule"/>
</dbReference>
<dbReference type="GO" id="GO:0016114">
    <property type="term" value="P:terpenoid biosynthetic process"/>
    <property type="evidence" value="ECO:0007669"/>
    <property type="project" value="InterPro"/>
</dbReference>
<dbReference type="CDD" id="cd00554">
    <property type="entry name" value="MECDP_synthase"/>
    <property type="match status" value="1"/>
</dbReference>
<dbReference type="FunFam" id="3.30.1330.50:FF:000001">
    <property type="entry name" value="2-C-methyl-D-erythritol 2,4-cyclodiphosphate synthase"/>
    <property type="match status" value="1"/>
</dbReference>
<dbReference type="Gene3D" id="3.30.1330.50">
    <property type="entry name" value="2-C-methyl-D-erythritol 2,4-cyclodiphosphate synthase"/>
    <property type="match status" value="1"/>
</dbReference>
<dbReference type="HAMAP" id="MF_00107">
    <property type="entry name" value="IspF"/>
    <property type="match status" value="1"/>
</dbReference>
<dbReference type="InterPro" id="IPR003526">
    <property type="entry name" value="MECDP_synthase"/>
</dbReference>
<dbReference type="InterPro" id="IPR020555">
    <property type="entry name" value="MECDP_synthase_CS"/>
</dbReference>
<dbReference type="InterPro" id="IPR036571">
    <property type="entry name" value="MECDP_synthase_sf"/>
</dbReference>
<dbReference type="NCBIfam" id="TIGR00151">
    <property type="entry name" value="ispF"/>
    <property type="match status" value="1"/>
</dbReference>
<dbReference type="PANTHER" id="PTHR43181">
    <property type="entry name" value="2-C-METHYL-D-ERYTHRITOL 2,4-CYCLODIPHOSPHATE SYNTHASE, CHLOROPLASTIC"/>
    <property type="match status" value="1"/>
</dbReference>
<dbReference type="PANTHER" id="PTHR43181:SF1">
    <property type="entry name" value="2-C-METHYL-D-ERYTHRITOL 2,4-CYCLODIPHOSPHATE SYNTHASE, CHLOROPLASTIC"/>
    <property type="match status" value="1"/>
</dbReference>
<dbReference type="Pfam" id="PF02542">
    <property type="entry name" value="YgbB"/>
    <property type="match status" value="1"/>
</dbReference>
<dbReference type="SUPFAM" id="SSF69765">
    <property type="entry name" value="IpsF-like"/>
    <property type="match status" value="1"/>
</dbReference>
<dbReference type="PROSITE" id="PS01350">
    <property type="entry name" value="ISPF"/>
    <property type="match status" value="1"/>
</dbReference>
<gene>
    <name evidence="1" type="primary">ispF</name>
    <name type="ordered locus">Rmet_1953</name>
</gene>
<reference key="1">
    <citation type="journal article" date="2010" name="PLoS ONE">
        <title>The complete genome sequence of Cupriavidus metallidurans strain CH34, a master survivalist in harsh and anthropogenic environments.</title>
        <authorList>
            <person name="Janssen P.J."/>
            <person name="Van Houdt R."/>
            <person name="Moors H."/>
            <person name="Monsieurs P."/>
            <person name="Morin N."/>
            <person name="Michaux A."/>
            <person name="Benotmane M.A."/>
            <person name="Leys N."/>
            <person name="Vallaeys T."/>
            <person name="Lapidus A."/>
            <person name="Monchy S."/>
            <person name="Medigue C."/>
            <person name="Taghavi S."/>
            <person name="McCorkle S."/>
            <person name="Dunn J."/>
            <person name="van der Lelie D."/>
            <person name="Mergeay M."/>
        </authorList>
    </citation>
    <scope>NUCLEOTIDE SEQUENCE [LARGE SCALE GENOMIC DNA]</scope>
    <source>
        <strain>ATCC 43123 / DSM 2839 / NBRC 102507 / CH34</strain>
    </source>
</reference>
<proteinExistence type="inferred from homology"/>
<evidence type="ECO:0000255" key="1">
    <source>
        <dbReference type="HAMAP-Rule" id="MF_00107"/>
    </source>
</evidence>
<feature type="chain" id="PRO_1000022868" description="2-C-methyl-D-erythritol 2,4-cyclodiphosphate synthase">
    <location>
        <begin position="1"/>
        <end position="168"/>
    </location>
</feature>
<feature type="binding site" evidence="1">
    <location>
        <begin position="13"/>
        <end position="15"/>
    </location>
    <ligand>
        <name>4-CDP-2-C-methyl-D-erythritol 2-phosphate</name>
        <dbReference type="ChEBI" id="CHEBI:57919"/>
    </ligand>
</feature>
<feature type="binding site" evidence="1">
    <location>
        <position position="13"/>
    </location>
    <ligand>
        <name>a divalent metal cation</name>
        <dbReference type="ChEBI" id="CHEBI:60240"/>
    </ligand>
</feature>
<feature type="binding site" evidence="1">
    <location>
        <position position="15"/>
    </location>
    <ligand>
        <name>a divalent metal cation</name>
        <dbReference type="ChEBI" id="CHEBI:60240"/>
    </ligand>
</feature>
<feature type="binding site" evidence="1">
    <location>
        <begin position="39"/>
        <end position="40"/>
    </location>
    <ligand>
        <name>4-CDP-2-C-methyl-D-erythritol 2-phosphate</name>
        <dbReference type="ChEBI" id="CHEBI:57919"/>
    </ligand>
</feature>
<feature type="binding site" evidence="1">
    <location>
        <position position="47"/>
    </location>
    <ligand>
        <name>a divalent metal cation</name>
        <dbReference type="ChEBI" id="CHEBI:60240"/>
    </ligand>
</feature>
<feature type="binding site" evidence="1">
    <location>
        <begin position="61"/>
        <end position="63"/>
    </location>
    <ligand>
        <name>4-CDP-2-C-methyl-D-erythritol 2-phosphate</name>
        <dbReference type="ChEBI" id="CHEBI:57919"/>
    </ligand>
</feature>
<feature type="binding site" evidence="1">
    <location>
        <begin position="66"/>
        <end position="70"/>
    </location>
    <ligand>
        <name>4-CDP-2-C-methyl-D-erythritol 2-phosphate</name>
        <dbReference type="ChEBI" id="CHEBI:57919"/>
    </ligand>
</feature>
<feature type="binding site" evidence="1">
    <location>
        <position position="144"/>
    </location>
    <ligand>
        <name>4-CDP-2-C-methyl-D-erythritol 2-phosphate</name>
        <dbReference type="ChEBI" id="CHEBI:57919"/>
    </ligand>
</feature>
<feature type="binding site" evidence="1">
    <location>
        <position position="147"/>
    </location>
    <ligand>
        <name>4-CDP-2-C-methyl-D-erythritol 2-phosphate</name>
        <dbReference type="ChEBI" id="CHEBI:57919"/>
    </ligand>
</feature>
<feature type="site" description="Transition state stabilizer" evidence="1">
    <location>
        <position position="39"/>
    </location>
</feature>
<feature type="site" description="Transition state stabilizer" evidence="1">
    <location>
        <position position="138"/>
    </location>
</feature>
<protein>
    <recommendedName>
        <fullName evidence="1">2-C-methyl-D-erythritol 2,4-cyclodiphosphate synthase</fullName>
        <shortName evidence="1">MECDP-synthase</shortName>
        <shortName evidence="1">MECPP-synthase</shortName>
        <shortName evidence="1">MECPS</shortName>
        <ecNumber evidence="1">4.6.1.12</ecNumber>
    </recommendedName>
</protein>
<comment type="function">
    <text evidence="1">Involved in the biosynthesis of isopentenyl diphosphate (IPP) and dimethylallyl diphosphate (DMAPP), two major building blocks of isoprenoid compounds. Catalyzes the conversion of 4-diphosphocytidyl-2-C-methyl-D-erythritol 2-phosphate (CDP-ME2P) to 2-C-methyl-D-erythritol 2,4-cyclodiphosphate (ME-CPP) with a corresponding release of cytidine 5-monophosphate (CMP).</text>
</comment>
<comment type="catalytic activity">
    <reaction evidence="1">
        <text>4-CDP-2-C-methyl-D-erythritol 2-phosphate = 2-C-methyl-D-erythritol 2,4-cyclic diphosphate + CMP</text>
        <dbReference type="Rhea" id="RHEA:23864"/>
        <dbReference type="ChEBI" id="CHEBI:57919"/>
        <dbReference type="ChEBI" id="CHEBI:58483"/>
        <dbReference type="ChEBI" id="CHEBI:60377"/>
        <dbReference type="EC" id="4.6.1.12"/>
    </reaction>
</comment>
<comment type="cofactor">
    <cofactor evidence="1">
        <name>a divalent metal cation</name>
        <dbReference type="ChEBI" id="CHEBI:60240"/>
    </cofactor>
    <text evidence="1">Binds 1 divalent metal cation per subunit.</text>
</comment>
<comment type="pathway">
    <text evidence="1">Isoprenoid biosynthesis; isopentenyl diphosphate biosynthesis via DXP pathway; isopentenyl diphosphate from 1-deoxy-D-xylulose 5-phosphate: step 4/6.</text>
</comment>
<comment type="subunit">
    <text evidence="1">Homotrimer.</text>
</comment>
<comment type="similarity">
    <text evidence="1">Belongs to the IspF family.</text>
</comment>
<organism>
    <name type="scientific">Cupriavidus metallidurans (strain ATCC 43123 / DSM 2839 / NBRC 102507 / CH34)</name>
    <name type="common">Ralstonia metallidurans</name>
    <dbReference type="NCBI Taxonomy" id="266264"/>
    <lineage>
        <taxon>Bacteria</taxon>
        <taxon>Pseudomonadati</taxon>
        <taxon>Pseudomonadota</taxon>
        <taxon>Betaproteobacteria</taxon>
        <taxon>Burkholderiales</taxon>
        <taxon>Burkholderiaceae</taxon>
        <taxon>Cupriavidus</taxon>
    </lineage>
</organism>